<protein>
    <recommendedName>
        <fullName evidence="1">Probable 4-deoxy-4-formamido-L-arabinose-phosphoundecaprenol deformylase ArnD</fullName>
        <ecNumber evidence="1">3.5.1.n3</ecNumber>
    </recommendedName>
</protein>
<dbReference type="EC" id="3.5.1.n3" evidence="1"/>
<dbReference type="EMBL" id="CP000800">
    <property type="protein sequence ID" value="ABV17216.1"/>
    <property type="molecule type" value="Genomic_DNA"/>
</dbReference>
<dbReference type="RefSeq" id="WP_000169738.1">
    <property type="nucleotide sequence ID" value="NC_009801.1"/>
</dbReference>
<dbReference type="SMR" id="A7ZP74"/>
<dbReference type="KEGG" id="ecw:EcE24377A_2551"/>
<dbReference type="HOGENOM" id="CLU_084199_0_0_6"/>
<dbReference type="UniPathway" id="UPA00030"/>
<dbReference type="UniPathway" id="UPA00036">
    <property type="reaction ID" value="UER00496"/>
</dbReference>
<dbReference type="Proteomes" id="UP000001122">
    <property type="component" value="Chromosome"/>
</dbReference>
<dbReference type="GO" id="GO:0016020">
    <property type="term" value="C:membrane"/>
    <property type="evidence" value="ECO:0007669"/>
    <property type="project" value="GOC"/>
</dbReference>
<dbReference type="GO" id="GO:0016811">
    <property type="term" value="F:hydrolase activity, acting on carbon-nitrogen (but not peptide) bonds, in linear amides"/>
    <property type="evidence" value="ECO:0007669"/>
    <property type="project" value="UniProtKB-UniRule"/>
</dbReference>
<dbReference type="GO" id="GO:0036108">
    <property type="term" value="P:4-amino-4-deoxy-alpha-L-arabinopyranosyl undecaprenyl phosphate biosynthetic process"/>
    <property type="evidence" value="ECO:0007669"/>
    <property type="project" value="UniProtKB-UniRule"/>
</dbReference>
<dbReference type="GO" id="GO:0009245">
    <property type="term" value="P:lipid A biosynthetic process"/>
    <property type="evidence" value="ECO:0007669"/>
    <property type="project" value="UniProtKB-UniRule"/>
</dbReference>
<dbReference type="GO" id="GO:0009103">
    <property type="term" value="P:lipopolysaccharide biosynthetic process"/>
    <property type="evidence" value="ECO:0007669"/>
    <property type="project" value="UniProtKB-UniRule"/>
</dbReference>
<dbReference type="GO" id="GO:0046677">
    <property type="term" value="P:response to antibiotic"/>
    <property type="evidence" value="ECO:0007669"/>
    <property type="project" value="UniProtKB-KW"/>
</dbReference>
<dbReference type="CDD" id="cd10939">
    <property type="entry name" value="CE4_ArnD"/>
    <property type="match status" value="1"/>
</dbReference>
<dbReference type="Gene3D" id="3.20.20.370">
    <property type="entry name" value="Glycoside hydrolase/deacetylase"/>
    <property type="match status" value="1"/>
</dbReference>
<dbReference type="HAMAP" id="MF_01870">
    <property type="entry name" value="ArnD"/>
    <property type="match status" value="1"/>
</dbReference>
<dbReference type="InterPro" id="IPR023557">
    <property type="entry name" value="ArnD"/>
</dbReference>
<dbReference type="InterPro" id="IPR011330">
    <property type="entry name" value="Glyco_hydro/deAcase_b/a-brl"/>
</dbReference>
<dbReference type="InterPro" id="IPR002509">
    <property type="entry name" value="NODB_dom"/>
</dbReference>
<dbReference type="InterPro" id="IPR050248">
    <property type="entry name" value="Polysacc_deacetylase_ArnD"/>
</dbReference>
<dbReference type="NCBIfam" id="NF011923">
    <property type="entry name" value="PRK15394.1"/>
    <property type="match status" value="1"/>
</dbReference>
<dbReference type="PANTHER" id="PTHR10587:SF137">
    <property type="entry name" value="4-DEOXY-4-FORMAMIDO-L-ARABINOSE-PHOSPHOUNDECAPRENOL DEFORMYLASE ARND-RELATED"/>
    <property type="match status" value="1"/>
</dbReference>
<dbReference type="PANTHER" id="PTHR10587">
    <property type="entry name" value="GLYCOSYL TRANSFERASE-RELATED"/>
    <property type="match status" value="1"/>
</dbReference>
<dbReference type="Pfam" id="PF01522">
    <property type="entry name" value="Polysacc_deac_1"/>
    <property type="match status" value="1"/>
</dbReference>
<dbReference type="SUPFAM" id="SSF88713">
    <property type="entry name" value="Glycoside hydrolase/deacetylase"/>
    <property type="match status" value="1"/>
</dbReference>
<dbReference type="PROSITE" id="PS51677">
    <property type="entry name" value="NODB"/>
    <property type="match status" value="1"/>
</dbReference>
<comment type="function">
    <text evidence="1">Catalyzes the deformylation of 4-deoxy-4-formamido-L-arabinose-phosphoundecaprenol to 4-amino-4-deoxy-L-arabinose-phosphoundecaprenol. The modified arabinose is attached to lipid A and is required for resistance to polymyxin and cationic antimicrobial peptides.</text>
</comment>
<comment type="catalytic activity">
    <reaction evidence="1">
        <text>4-deoxy-4-formamido-alpha-L-arabinopyranosyl di-trans,octa-cis-undecaprenyl phosphate + H2O = 4-amino-4-deoxy-alpha-L-arabinopyranosyl di-trans,octa-cis-undecaprenyl phosphate + formate</text>
        <dbReference type="Rhea" id="RHEA:27734"/>
        <dbReference type="ChEBI" id="CHEBI:15377"/>
        <dbReference type="ChEBI" id="CHEBI:15740"/>
        <dbReference type="ChEBI" id="CHEBI:58909"/>
        <dbReference type="ChEBI" id="CHEBI:60463"/>
        <dbReference type="EC" id="3.5.1.n3"/>
    </reaction>
</comment>
<comment type="pathway">
    <text evidence="1">Glycolipid biosynthesis; 4-amino-4-deoxy-alpha-L-arabinose undecaprenyl phosphate biosynthesis; 4-amino-4-deoxy-alpha-L-arabinose undecaprenyl phosphate from UDP-4-deoxy-4-formamido-beta-L-arabinose and undecaprenyl phosphate: step 2/2.</text>
</comment>
<comment type="pathway">
    <text evidence="1">Bacterial outer membrane biogenesis; lipopolysaccharide biosynthesis.</text>
</comment>
<comment type="similarity">
    <text evidence="1">Belongs to the polysaccharide deacetylase family. ArnD deformylase subfamily.</text>
</comment>
<proteinExistence type="inferred from homology"/>
<sequence length="296" mass="33142">MTKVGLRIDVDTFRGTREGVPRLLEILSKHNIQASIFFSVGPDNMGRHLWRLVKPQFLWKMLRSNAASLYGWDILLAGTAWPGKEIGHANADIIREAAKHHEVGLHAWDHHAWQARSSNWDRQTMIDDIARGLRTLEEIIGQPVTCSAAAGWRADQKVIEAKEAFHLRYNSDCRGAMPFRPLLESGNPGTAQIPVTLPTWDEVIGRDVKAEDFNGWLLNRILRDKGTPVYTIHAEVEGCAYQHNFVDLLKRAAQEGVTFCPLSELLSETLPLGQVVRGNIAGREGWLGCQQIAGSR</sequence>
<gene>
    <name evidence="1" type="primary">arnD</name>
    <name type="ordered locus">EcE24377A_2551</name>
</gene>
<keyword id="KW-0046">Antibiotic resistance</keyword>
<keyword id="KW-0378">Hydrolase</keyword>
<keyword id="KW-0441">Lipid A biosynthesis</keyword>
<keyword id="KW-0444">Lipid biosynthesis</keyword>
<keyword id="KW-0443">Lipid metabolism</keyword>
<keyword id="KW-0448">Lipopolysaccharide biosynthesis</keyword>
<keyword id="KW-1185">Reference proteome</keyword>
<reference key="1">
    <citation type="journal article" date="2008" name="J. Bacteriol.">
        <title>The pangenome structure of Escherichia coli: comparative genomic analysis of E. coli commensal and pathogenic isolates.</title>
        <authorList>
            <person name="Rasko D.A."/>
            <person name="Rosovitz M.J."/>
            <person name="Myers G.S.A."/>
            <person name="Mongodin E.F."/>
            <person name="Fricke W.F."/>
            <person name="Gajer P."/>
            <person name="Crabtree J."/>
            <person name="Sebaihia M."/>
            <person name="Thomson N.R."/>
            <person name="Chaudhuri R."/>
            <person name="Henderson I.R."/>
            <person name="Sperandio V."/>
            <person name="Ravel J."/>
        </authorList>
    </citation>
    <scope>NUCLEOTIDE SEQUENCE [LARGE SCALE GENOMIC DNA]</scope>
    <source>
        <strain>E24377A / ETEC</strain>
    </source>
</reference>
<feature type="chain" id="PRO_0000383502" description="Probable 4-deoxy-4-formamido-L-arabinose-phosphoundecaprenol deformylase ArnD">
    <location>
        <begin position="1"/>
        <end position="296"/>
    </location>
</feature>
<feature type="domain" description="NodB homology" evidence="1">
    <location>
        <begin position="2"/>
        <end position="260"/>
    </location>
</feature>
<accession>A7ZP74</accession>
<evidence type="ECO:0000255" key="1">
    <source>
        <dbReference type="HAMAP-Rule" id="MF_01870"/>
    </source>
</evidence>
<organism>
    <name type="scientific">Escherichia coli O139:H28 (strain E24377A / ETEC)</name>
    <dbReference type="NCBI Taxonomy" id="331111"/>
    <lineage>
        <taxon>Bacteria</taxon>
        <taxon>Pseudomonadati</taxon>
        <taxon>Pseudomonadota</taxon>
        <taxon>Gammaproteobacteria</taxon>
        <taxon>Enterobacterales</taxon>
        <taxon>Enterobacteriaceae</taxon>
        <taxon>Escherichia</taxon>
    </lineage>
</organism>
<name>ARND_ECO24</name>